<protein>
    <recommendedName>
        <fullName>Oleosin Zm-I</fullName>
    </recommendedName>
    <alternativeName>
        <fullName>Lipid body-associated major protein</fullName>
    </alternativeName>
    <alternativeName>
        <fullName>Lipid body-associated protein L3</fullName>
    </alternativeName>
    <alternativeName>
        <fullName>Oleosin 16 kDa</fullName>
    </alternativeName>
</protein>
<proteinExistence type="evidence at transcript level"/>
<comment type="function">
    <text>May have a structural role to stabilize the lipid body during desiccation of the seed by preventing coalescence of the oil. Probably interacts with both lipid and phospholipid moieties of lipid bodies. May also provide recognition signals for specific lipase anchorage in lipolysis during seedling growth.</text>
</comment>
<comment type="subcellular location">
    <subcellularLocation>
        <location>Lipid droplet</location>
    </subcellularLocation>
    <subcellularLocation>
        <location>Membrane</location>
        <topology>Multi-pass membrane protein</topology>
    </subcellularLocation>
    <text>Surface of oil bodies. Oleosins exist at a monolayer lipid/water interface.</text>
</comment>
<comment type="PTM">
    <text>The N-terminus is blocked.</text>
</comment>
<comment type="similarity">
    <text evidence="4">Belongs to the oleosin family.</text>
</comment>
<gene>
    <name type="primary">OLE16</name>
    <name type="synonym">OLE1</name>
</gene>
<reference key="1">
    <citation type="journal article" date="1994" name="Plant Mol. Biol.">
        <title>Genes encoding oleosins in maize kernel of inbreds Mo17 and B73.</title>
        <authorList>
            <person name="Lee K."/>
            <person name="Huang A.H.C."/>
        </authorList>
    </citation>
    <scope>NUCLEOTIDE SEQUENCE [GENOMIC DNA]</scope>
    <source>
        <strain>cv. Missouri 17</strain>
    </source>
</reference>
<reference key="2">
    <citation type="journal article" date="1987" name="J. Biol. Chem.">
        <title>The major protein from lipid bodies of maize. Characterization and structure based on cDNA cloning.</title>
        <authorList>
            <person name="Vance V.B."/>
            <person name="Huang A.H.C."/>
        </authorList>
    </citation>
    <scope>NUCLEOTIDE SEQUENCE [MRNA] OF 10-156</scope>
</reference>
<evidence type="ECO:0000250" key="1"/>
<evidence type="ECO:0000255" key="2"/>
<evidence type="ECO:0000256" key="3">
    <source>
        <dbReference type="SAM" id="MobiDB-lite"/>
    </source>
</evidence>
<evidence type="ECO:0000305" key="4"/>
<organism>
    <name type="scientific">Zea mays</name>
    <name type="common">Maize</name>
    <dbReference type="NCBI Taxonomy" id="4577"/>
    <lineage>
        <taxon>Eukaryota</taxon>
        <taxon>Viridiplantae</taxon>
        <taxon>Streptophyta</taxon>
        <taxon>Embryophyta</taxon>
        <taxon>Tracheophyta</taxon>
        <taxon>Spermatophyta</taxon>
        <taxon>Magnoliopsida</taxon>
        <taxon>Liliopsida</taxon>
        <taxon>Poales</taxon>
        <taxon>Poaceae</taxon>
        <taxon>PACMAD clade</taxon>
        <taxon>Panicoideae</taxon>
        <taxon>Andropogonodae</taxon>
        <taxon>Andropogoneae</taxon>
        <taxon>Tripsacinae</taxon>
        <taxon>Zea</taxon>
    </lineage>
</organism>
<sequence>MADHHRGATGGGGGYGDLQRGGGMHGEAQQQQKQGAMMTALKAATAATFGGSMLVLSGLILAGTVIALTVATPVLVIFSPVLVPAAIALALMAAGFVTSGGLGVAALSVFSWMYKYLTGKHPPAADQLDHAKARLASKARDVKDAAQHRIDQAQGS</sequence>
<keyword id="KW-0007">Acetylation</keyword>
<keyword id="KW-0551">Lipid droplet</keyword>
<keyword id="KW-0472">Membrane</keyword>
<keyword id="KW-1185">Reference proteome</keyword>
<keyword id="KW-0812">Transmembrane</keyword>
<keyword id="KW-1133">Transmembrane helix</keyword>
<accession>P13436</accession>
<accession>Q43244</accession>
<name>OLEO1_MAIZE</name>
<dbReference type="EMBL" id="U13701">
    <property type="protein sequence ID" value="AAA68065.1"/>
    <property type="molecule type" value="Genomic_DNA"/>
</dbReference>
<dbReference type="EMBL" id="M17225">
    <property type="protein sequence ID" value="AAA33481.1"/>
    <property type="molecule type" value="mRNA"/>
</dbReference>
<dbReference type="PIR" id="A29788">
    <property type="entry name" value="A29788"/>
</dbReference>
<dbReference type="PIR" id="S52029">
    <property type="entry name" value="S52029"/>
</dbReference>
<dbReference type="RefSeq" id="NP_001105338.1">
    <property type="nucleotide sequence ID" value="NM_001111868.1"/>
</dbReference>
<dbReference type="FunCoup" id="P13436">
    <property type="interactions" value="1818"/>
</dbReference>
<dbReference type="STRING" id="4577.P13436"/>
<dbReference type="PaxDb" id="4577-GRMZM2G337229_P01"/>
<dbReference type="GeneID" id="542263"/>
<dbReference type="KEGG" id="zma:542263"/>
<dbReference type="MaizeGDB" id="65613"/>
<dbReference type="eggNOG" id="ENOG502RZIP">
    <property type="taxonomic scope" value="Eukaryota"/>
</dbReference>
<dbReference type="InParanoid" id="P13436"/>
<dbReference type="OrthoDB" id="690239at2759"/>
<dbReference type="Proteomes" id="UP000007305">
    <property type="component" value="Unplaced"/>
</dbReference>
<dbReference type="ExpressionAtlas" id="P13436">
    <property type="expression patterns" value="baseline and differential"/>
</dbReference>
<dbReference type="GO" id="GO:0016020">
    <property type="term" value="C:membrane"/>
    <property type="evidence" value="ECO:0007669"/>
    <property type="project" value="UniProtKB-SubCell"/>
</dbReference>
<dbReference type="GO" id="GO:0012511">
    <property type="term" value="C:monolayer-surrounded lipid storage body"/>
    <property type="evidence" value="ECO:0007669"/>
    <property type="project" value="InterPro"/>
</dbReference>
<dbReference type="GO" id="GO:0019915">
    <property type="term" value="P:lipid storage"/>
    <property type="evidence" value="ECO:0000318"/>
    <property type="project" value="GO_Central"/>
</dbReference>
<dbReference type="GO" id="GO:0009791">
    <property type="term" value="P:post-embryonic development"/>
    <property type="evidence" value="ECO:0007669"/>
    <property type="project" value="UniProtKB-ARBA"/>
</dbReference>
<dbReference type="GO" id="GO:0048608">
    <property type="term" value="P:reproductive structure development"/>
    <property type="evidence" value="ECO:0007669"/>
    <property type="project" value="UniProtKB-ARBA"/>
</dbReference>
<dbReference type="InterPro" id="IPR000136">
    <property type="entry name" value="Oleosin"/>
</dbReference>
<dbReference type="PANTHER" id="PTHR33203">
    <property type="entry name" value="OLEOSIN"/>
    <property type="match status" value="1"/>
</dbReference>
<dbReference type="PANTHER" id="PTHR33203:SF25">
    <property type="entry name" value="OLEOSIN 18.5 KDA"/>
    <property type="match status" value="1"/>
</dbReference>
<dbReference type="Pfam" id="PF01277">
    <property type="entry name" value="Oleosin"/>
    <property type="match status" value="1"/>
</dbReference>
<dbReference type="PROSITE" id="PS00811">
    <property type="entry name" value="OLEOSINS"/>
    <property type="match status" value="1"/>
</dbReference>
<feature type="initiator methionine" description="Removed" evidence="1">
    <location>
        <position position="1"/>
    </location>
</feature>
<feature type="chain" id="PRO_0000108144" description="Oleosin Zm-I">
    <location>
        <begin position="2"/>
        <end position="156"/>
    </location>
</feature>
<feature type="transmembrane region" description="Helical" evidence="2">
    <location>
        <begin position="51"/>
        <end position="71"/>
    </location>
</feature>
<feature type="transmembrane region" description="Helical" evidence="2">
    <location>
        <begin position="95"/>
        <end position="115"/>
    </location>
</feature>
<feature type="region of interest" description="Disordered" evidence="3">
    <location>
        <begin position="1"/>
        <end position="30"/>
    </location>
</feature>
<feature type="region of interest" description="Polar">
    <location>
        <begin position="2"/>
        <end position="42"/>
    </location>
</feature>
<feature type="region of interest" description="Hydrophobic">
    <location>
        <begin position="43"/>
        <end position="114"/>
    </location>
</feature>
<feature type="compositionally biased region" description="Gly residues" evidence="3">
    <location>
        <begin position="8"/>
        <end position="25"/>
    </location>
</feature>
<feature type="modified residue" description="N-acetylalanine" evidence="1">
    <location>
        <position position="2"/>
    </location>
</feature>
<feature type="sequence conflict" description="In Ref. 2; AAA33481." evidence="4" ref="2">
    <original>G</original>
    <variation>R</variation>
    <location>
        <position position="10"/>
    </location>
</feature>
<feature type="sequence conflict" description="In Ref. 2; AAA33481." evidence="4" ref="2">
    <original>A</original>
    <variation>G</variation>
    <location>
        <position position="124"/>
    </location>
</feature>
<feature type="sequence conflict" description="In Ref. 2; AAA33481." evidence="4" ref="2">
    <original>V</original>
    <variation>I</variation>
    <location>
        <position position="142"/>
    </location>
</feature>